<comment type="similarity">
    <text evidence="3">Belongs to the short-chain dehydrogenases/reductases (SDR) family.</text>
</comment>
<gene>
    <name type="ordered locus">lin0452</name>
</gene>
<feature type="chain" id="PRO_0000054882" description="Uncharacterized oxidoreductase Lin0452">
    <location>
        <begin position="1"/>
        <end position="248"/>
    </location>
</feature>
<feature type="active site" description="Proton acceptor" evidence="2">
    <location>
        <position position="154"/>
    </location>
</feature>
<feature type="binding site" evidence="1">
    <location>
        <begin position="9"/>
        <end position="33"/>
    </location>
    <ligand>
        <name>NADP(+)</name>
        <dbReference type="ChEBI" id="CHEBI:58349"/>
    </ligand>
</feature>
<feature type="binding site" evidence="1">
    <location>
        <position position="141"/>
    </location>
    <ligand>
        <name>substrate</name>
    </ligand>
</feature>
<protein>
    <recommendedName>
        <fullName>Uncharacterized oxidoreductase Lin0452</fullName>
        <ecNumber>1.-.-.-</ecNumber>
    </recommendedName>
</protein>
<keyword id="KW-0560">Oxidoreductase</keyword>
<reference key="1">
    <citation type="journal article" date="2001" name="Science">
        <title>Comparative genomics of Listeria species.</title>
        <authorList>
            <person name="Glaser P."/>
            <person name="Frangeul L."/>
            <person name="Buchrieser C."/>
            <person name="Rusniok C."/>
            <person name="Amend A."/>
            <person name="Baquero F."/>
            <person name="Berche P."/>
            <person name="Bloecker H."/>
            <person name="Brandt P."/>
            <person name="Chakraborty T."/>
            <person name="Charbit A."/>
            <person name="Chetouani F."/>
            <person name="Couve E."/>
            <person name="de Daruvar A."/>
            <person name="Dehoux P."/>
            <person name="Domann E."/>
            <person name="Dominguez-Bernal G."/>
            <person name="Duchaud E."/>
            <person name="Durant L."/>
            <person name="Dussurget O."/>
            <person name="Entian K.-D."/>
            <person name="Fsihi H."/>
            <person name="Garcia-del Portillo F."/>
            <person name="Garrido P."/>
            <person name="Gautier L."/>
            <person name="Goebel W."/>
            <person name="Gomez-Lopez N."/>
            <person name="Hain T."/>
            <person name="Hauf J."/>
            <person name="Jackson D."/>
            <person name="Jones L.-M."/>
            <person name="Kaerst U."/>
            <person name="Kreft J."/>
            <person name="Kuhn M."/>
            <person name="Kunst F."/>
            <person name="Kurapkat G."/>
            <person name="Madueno E."/>
            <person name="Maitournam A."/>
            <person name="Mata Vicente J."/>
            <person name="Ng E."/>
            <person name="Nedjari H."/>
            <person name="Nordsiek G."/>
            <person name="Novella S."/>
            <person name="de Pablos B."/>
            <person name="Perez-Diaz J.-C."/>
            <person name="Purcell R."/>
            <person name="Remmel B."/>
            <person name="Rose M."/>
            <person name="Schlueter T."/>
            <person name="Simoes N."/>
            <person name="Tierrez A."/>
            <person name="Vazquez-Boland J.-A."/>
            <person name="Voss H."/>
            <person name="Wehland J."/>
            <person name="Cossart P."/>
        </authorList>
    </citation>
    <scope>NUCLEOTIDE SEQUENCE [LARGE SCALE GENOMIC DNA]</scope>
    <source>
        <strain>ATCC BAA-680 / CLIP 11262</strain>
    </source>
</reference>
<name>Y452_LISIN</name>
<evidence type="ECO:0000250" key="1"/>
<evidence type="ECO:0000255" key="2">
    <source>
        <dbReference type="PROSITE-ProRule" id="PRU10001"/>
    </source>
</evidence>
<evidence type="ECO:0000305" key="3"/>
<accession>Q92EK7</accession>
<organism>
    <name type="scientific">Listeria innocua serovar 6a (strain ATCC BAA-680 / CLIP 11262)</name>
    <dbReference type="NCBI Taxonomy" id="272626"/>
    <lineage>
        <taxon>Bacteria</taxon>
        <taxon>Bacillati</taxon>
        <taxon>Bacillota</taxon>
        <taxon>Bacilli</taxon>
        <taxon>Bacillales</taxon>
        <taxon>Listeriaceae</taxon>
        <taxon>Listeria</taxon>
    </lineage>
</organism>
<sequence length="248" mass="26808">MTIKNKVIIITGASSGIGEATAILLAEKGAKLVLAARRVEKLEKIVQTIKASSGEAIFAKTDVTKREDNKKLVELAIERYGKVDAIFLNAGIMPNSPLSALKEDEWEQMIDINIKGVLNGIAAVLPSFIAQKSGHIIATSSVAGLKAYPGGAVYGATKWAVRDLMEVLRMESAQEGTNIRTATIYPAAINTELLETITDKETEQGMTNLYKQYGVTPDRIASIVAYAIDQPEDINVNEFTVGPTTQPW</sequence>
<dbReference type="EC" id="1.-.-.-"/>
<dbReference type="EMBL" id="AL596165">
    <property type="protein sequence ID" value="CAC95684.1"/>
    <property type="molecule type" value="Genomic_DNA"/>
</dbReference>
<dbReference type="PIR" id="AD1489">
    <property type="entry name" value="AD1489"/>
</dbReference>
<dbReference type="RefSeq" id="WP_003760438.1">
    <property type="nucleotide sequence ID" value="NC_003212.1"/>
</dbReference>
<dbReference type="SMR" id="Q92EK7"/>
<dbReference type="STRING" id="272626.gene:17564778"/>
<dbReference type="GeneID" id="93233905"/>
<dbReference type="KEGG" id="lin:lin0452"/>
<dbReference type="eggNOG" id="COG4221">
    <property type="taxonomic scope" value="Bacteria"/>
</dbReference>
<dbReference type="HOGENOM" id="CLU_010194_2_10_9"/>
<dbReference type="OrthoDB" id="9775296at2"/>
<dbReference type="Proteomes" id="UP000002513">
    <property type="component" value="Chromosome"/>
</dbReference>
<dbReference type="GO" id="GO:0016491">
    <property type="term" value="F:oxidoreductase activity"/>
    <property type="evidence" value="ECO:0007669"/>
    <property type="project" value="UniProtKB-KW"/>
</dbReference>
<dbReference type="CDD" id="cd05233">
    <property type="entry name" value="SDR_c"/>
    <property type="match status" value="1"/>
</dbReference>
<dbReference type="FunFam" id="3.40.50.720:FF:000047">
    <property type="entry name" value="NADP-dependent L-serine/L-allo-threonine dehydrogenase"/>
    <property type="match status" value="1"/>
</dbReference>
<dbReference type="Gene3D" id="3.40.50.720">
    <property type="entry name" value="NAD(P)-binding Rossmann-like Domain"/>
    <property type="match status" value="1"/>
</dbReference>
<dbReference type="InterPro" id="IPR036291">
    <property type="entry name" value="NAD(P)-bd_dom_sf"/>
</dbReference>
<dbReference type="InterPro" id="IPR020904">
    <property type="entry name" value="Sc_DH/Rdtase_CS"/>
</dbReference>
<dbReference type="InterPro" id="IPR002347">
    <property type="entry name" value="SDR_fam"/>
</dbReference>
<dbReference type="PANTHER" id="PTHR43115">
    <property type="entry name" value="DEHYDROGENASE/REDUCTASE SDR FAMILY MEMBER 11"/>
    <property type="match status" value="1"/>
</dbReference>
<dbReference type="PANTHER" id="PTHR43115:SF4">
    <property type="entry name" value="DEHYDROGENASE_REDUCTASE SDR FAMILY MEMBER 11"/>
    <property type="match status" value="1"/>
</dbReference>
<dbReference type="Pfam" id="PF00106">
    <property type="entry name" value="adh_short"/>
    <property type="match status" value="1"/>
</dbReference>
<dbReference type="PRINTS" id="PR00081">
    <property type="entry name" value="GDHRDH"/>
</dbReference>
<dbReference type="SUPFAM" id="SSF51735">
    <property type="entry name" value="NAD(P)-binding Rossmann-fold domains"/>
    <property type="match status" value="1"/>
</dbReference>
<dbReference type="PROSITE" id="PS00061">
    <property type="entry name" value="ADH_SHORT"/>
    <property type="match status" value="1"/>
</dbReference>
<proteinExistence type="inferred from homology"/>